<protein>
    <recommendedName>
        <fullName evidence="1">Large ribosomal subunit protein bL31</fullName>
    </recommendedName>
    <alternativeName>
        <fullName evidence="2">50S ribosomal protein L31</fullName>
    </alternativeName>
</protein>
<evidence type="ECO:0000255" key="1">
    <source>
        <dbReference type="HAMAP-Rule" id="MF_00501"/>
    </source>
</evidence>
<evidence type="ECO:0000305" key="2"/>
<feature type="chain" id="PRO_1000126747" description="Large ribosomal subunit protein bL31">
    <location>
        <begin position="1"/>
        <end position="76"/>
    </location>
</feature>
<feature type="binding site" evidence="1">
    <location>
        <position position="16"/>
    </location>
    <ligand>
        <name>Zn(2+)</name>
        <dbReference type="ChEBI" id="CHEBI:29105"/>
    </ligand>
</feature>
<feature type="binding site" evidence="1">
    <location>
        <position position="18"/>
    </location>
    <ligand>
        <name>Zn(2+)</name>
        <dbReference type="ChEBI" id="CHEBI:29105"/>
    </ligand>
</feature>
<feature type="binding site" evidence="1">
    <location>
        <position position="36"/>
    </location>
    <ligand>
        <name>Zn(2+)</name>
        <dbReference type="ChEBI" id="CHEBI:29105"/>
    </ligand>
</feature>
<feature type="binding site" evidence="1">
    <location>
        <position position="39"/>
    </location>
    <ligand>
        <name>Zn(2+)</name>
        <dbReference type="ChEBI" id="CHEBI:29105"/>
    </ligand>
</feature>
<dbReference type="EMBL" id="CP000478">
    <property type="protein sequence ID" value="ABK17399.1"/>
    <property type="molecule type" value="Genomic_DNA"/>
</dbReference>
<dbReference type="RefSeq" id="WP_011698569.1">
    <property type="nucleotide sequence ID" value="NC_008554.1"/>
</dbReference>
<dbReference type="SMR" id="A0LIZ7"/>
<dbReference type="FunCoup" id="A0LIZ7">
    <property type="interactions" value="443"/>
</dbReference>
<dbReference type="STRING" id="335543.Sfum_1712"/>
<dbReference type="KEGG" id="sfu:Sfum_1712"/>
<dbReference type="eggNOG" id="COG0254">
    <property type="taxonomic scope" value="Bacteria"/>
</dbReference>
<dbReference type="HOGENOM" id="CLU_114306_4_3_7"/>
<dbReference type="InParanoid" id="A0LIZ7"/>
<dbReference type="OrthoDB" id="9803251at2"/>
<dbReference type="Proteomes" id="UP000001784">
    <property type="component" value="Chromosome"/>
</dbReference>
<dbReference type="GO" id="GO:1990904">
    <property type="term" value="C:ribonucleoprotein complex"/>
    <property type="evidence" value="ECO:0007669"/>
    <property type="project" value="UniProtKB-KW"/>
</dbReference>
<dbReference type="GO" id="GO:0005840">
    <property type="term" value="C:ribosome"/>
    <property type="evidence" value="ECO:0007669"/>
    <property type="project" value="UniProtKB-KW"/>
</dbReference>
<dbReference type="GO" id="GO:0046872">
    <property type="term" value="F:metal ion binding"/>
    <property type="evidence" value="ECO:0007669"/>
    <property type="project" value="UniProtKB-KW"/>
</dbReference>
<dbReference type="GO" id="GO:0019843">
    <property type="term" value="F:rRNA binding"/>
    <property type="evidence" value="ECO:0007669"/>
    <property type="project" value="UniProtKB-KW"/>
</dbReference>
<dbReference type="GO" id="GO:0003735">
    <property type="term" value="F:structural constituent of ribosome"/>
    <property type="evidence" value="ECO:0007669"/>
    <property type="project" value="InterPro"/>
</dbReference>
<dbReference type="GO" id="GO:0006412">
    <property type="term" value="P:translation"/>
    <property type="evidence" value="ECO:0007669"/>
    <property type="project" value="UniProtKB-UniRule"/>
</dbReference>
<dbReference type="Gene3D" id="4.10.830.30">
    <property type="entry name" value="Ribosomal protein L31"/>
    <property type="match status" value="1"/>
</dbReference>
<dbReference type="HAMAP" id="MF_00501">
    <property type="entry name" value="Ribosomal_bL31_1"/>
    <property type="match status" value="1"/>
</dbReference>
<dbReference type="InterPro" id="IPR034704">
    <property type="entry name" value="Ribosomal_bL28/bL31-like_sf"/>
</dbReference>
<dbReference type="InterPro" id="IPR002150">
    <property type="entry name" value="Ribosomal_bL31"/>
</dbReference>
<dbReference type="InterPro" id="IPR027491">
    <property type="entry name" value="Ribosomal_bL31_A"/>
</dbReference>
<dbReference type="InterPro" id="IPR042105">
    <property type="entry name" value="Ribosomal_bL31_sf"/>
</dbReference>
<dbReference type="NCBIfam" id="TIGR00105">
    <property type="entry name" value="L31"/>
    <property type="match status" value="1"/>
</dbReference>
<dbReference type="NCBIfam" id="NF000612">
    <property type="entry name" value="PRK00019.1"/>
    <property type="match status" value="1"/>
</dbReference>
<dbReference type="NCBIfam" id="NF001809">
    <property type="entry name" value="PRK00528.1"/>
    <property type="match status" value="1"/>
</dbReference>
<dbReference type="PANTHER" id="PTHR33280">
    <property type="entry name" value="50S RIBOSOMAL PROTEIN L31, CHLOROPLASTIC"/>
    <property type="match status" value="1"/>
</dbReference>
<dbReference type="PANTHER" id="PTHR33280:SF1">
    <property type="entry name" value="LARGE RIBOSOMAL SUBUNIT PROTEIN BL31C"/>
    <property type="match status" value="1"/>
</dbReference>
<dbReference type="Pfam" id="PF01197">
    <property type="entry name" value="Ribosomal_L31"/>
    <property type="match status" value="1"/>
</dbReference>
<dbReference type="PRINTS" id="PR01249">
    <property type="entry name" value="RIBOSOMALL31"/>
</dbReference>
<dbReference type="SUPFAM" id="SSF143800">
    <property type="entry name" value="L28p-like"/>
    <property type="match status" value="1"/>
</dbReference>
<dbReference type="PROSITE" id="PS01143">
    <property type="entry name" value="RIBOSOMAL_L31"/>
    <property type="match status" value="1"/>
</dbReference>
<reference key="1">
    <citation type="submission" date="2006-10" db="EMBL/GenBank/DDBJ databases">
        <title>Complete sequence of Syntrophobacter fumaroxidans MPOB.</title>
        <authorList>
            <consortium name="US DOE Joint Genome Institute"/>
            <person name="Copeland A."/>
            <person name="Lucas S."/>
            <person name="Lapidus A."/>
            <person name="Barry K."/>
            <person name="Detter J.C."/>
            <person name="Glavina del Rio T."/>
            <person name="Hammon N."/>
            <person name="Israni S."/>
            <person name="Pitluck S."/>
            <person name="Goltsman E.G."/>
            <person name="Martinez M."/>
            <person name="Schmutz J."/>
            <person name="Larimer F."/>
            <person name="Land M."/>
            <person name="Hauser L."/>
            <person name="Kyrpides N."/>
            <person name="Kim E."/>
            <person name="Boone D.R."/>
            <person name="Brockman F."/>
            <person name="Culley D."/>
            <person name="Ferry J."/>
            <person name="Gunsalus R."/>
            <person name="McInerney M.J."/>
            <person name="Morrison M."/>
            <person name="Plugge C."/>
            <person name="Rohlin L."/>
            <person name="Scholten J."/>
            <person name="Sieber J."/>
            <person name="Stams A.J.M."/>
            <person name="Worm P."/>
            <person name="Henstra A.M."/>
            <person name="Richardson P."/>
        </authorList>
    </citation>
    <scope>NUCLEOTIDE SEQUENCE [LARGE SCALE GENOMIC DNA]</scope>
    <source>
        <strain>DSM 10017 / MPOB</strain>
    </source>
</reference>
<sequence>MKEGIHPVYHETVIRCACGAEIPTGSTKKEIRVEICSKCHPFYTGKQKLVDSAGRIERFRRKYEKFQKKETPESTE</sequence>
<name>RL31_SYNFM</name>
<organism>
    <name type="scientific">Syntrophobacter fumaroxidans (strain DSM 10017 / MPOB)</name>
    <dbReference type="NCBI Taxonomy" id="335543"/>
    <lineage>
        <taxon>Bacteria</taxon>
        <taxon>Pseudomonadati</taxon>
        <taxon>Thermodesulfobacteriota</taxon>
        <taxon>Syntrophobacteria</taxon>
        <taxon>Syntrophobacterales</taxon>
        <taxon>Syntrophobacteraceae</taxon>
        <taxon>Syntrophobacter</taxon>
    </lineage>
</organism>
<gene>
    <name evidence="1" type="primary">rpmE</name>
    <name type="ordered locus">Sfum_1712</name>
</gene>
<proteinExistence type="inferred from homology"/>
<accession>A0LIZ7</accession>
<comment type="function">
    <text evidence="1">Binds the 23S rRNA.</text>
</comment>
<comment type="cofactor">
    <cofactor evidence="1">
        <name>Zn(2+)</name>
        <dbReference type="ChEBI" id="CHEBI:29105"/>
    </cofactor>
    <text evidence="1">Binds 1 zinc ion per subunit.</text>
</comment>
<comment type="subunit">
    <text evidence="1">Part of the 50S ribosomal subunit.</text>
</comment>
<comment type="similarity">
    <text evidence="1">Belongs to the bacterial ribosomal protein bL31 family. Type A subfamily.</text>
</comment>
<keyword id="KW-0479">Metal-binding</keyword>
<keyword id="KW-1185">Reference proteome</keyword>
<keyword id="KW-0687">Ribonucleoprotein</keyword>
<keyword id="KW-0689">Ribosomal protein</keyword>
<keyword id="KW-0694">RNA-binding</keyword>
<keyword id="KW-0699">rRNA-binding</keyword>
<keyword id="KW-0862">Zinc</keyword>